<name>QUEA_STRPC</name>
<keyword id="KW-0963">Cytoplasm</keyword>
<keyword id="KW-0671">Queuosine biosynthesis</keyword>
<keyword id="KW-0949">S-adenosyl-L-methionine</keyword>
<keyword id="KW-0808">Transferase</keyword>
<accession>Q1JL45</accession>
<gene>
    <name evidence="1" type="primary">queA</name>
    <name type="ordered locus">MGAS9429_Spy1187</name>
</gene>
<evidence type="ECO:0000255" key="1">
    <source>
        <dbReference type="HAMAP-Rule" id="MF_00113"/>
    </source>
</evidence>
<proteinExistence type="inferred from homology"/>
<feature type="chain" id="PRO_1000015290" description="S-adenosylmethionine:tRNA ribosyltransferase-isomerase">
    <location>
        <begin position="1"/>
        <end position="342"/>
    </location>
</feature>
<protein>
    <recommendedName>
        <fullName evidence="1">S-adenosylmethionine:tRNA ribosyltransferase-isomerase</fullName>
        <ecNumber evidence="1">2.4.99.17</ecNumber>
    </recommendedName>
    <alternativeName>
        <fullName evidence="1">Queuosine biosynthesis protein QueA</fullName>
    </alternativeName>
</protein>
<comment type="function">
    <text evidence="1">Transfers and isomerizes the ribose moiety from AdoMet to the 7-aminomethyl group of 7-deazaguanine (preQ1-tRNA) to give epoxyqueuosine (oQ-tRNA).</text>
</comment>
<comment type="catalytic activity">
    <reaction evidence="1">
        <text>7-aminomethyl-7-carbaguanosine(34) in tRNA + S-adenosyl-L-methionine = epoxyqueuosine(34) in tRNA + adenine + L-methionine + 2 H(+)</text>
        <dbReference type="Rhea" id="RHEA:32155"/>
        <dbReference type="Rhea" id="RHEA-COMP:10342"/>
        <dbReference type="Rhea" id="RHEA-COMP:18582"/>
        <dbReference type="ChEBI" id="CHEBI:15378"/>
        <dbReference type="ChEBI" id="CHEBI:16708"/>
        <dbReference type="ChEBI" id="CHEBI:57844"/>
        <dbReference type="ChEBI" id="CHEBI:59789"/>
        <dbReference type="ChEBI" id="CHEBI:82833"/>
        <dbReference type="ChEBI" id="CHEBI:194443"/>
        <dbReference type="EC" id="2.4.99.17"/>
    </reaction>
</comment>
<comment type="pathway">
    <text evidence="1">tRNA modification; tRNA-queuosine biosynthesis.</text>
</comment>
<comment type="subunit">
    <text evidence="1">Monomer.</text>
</comment>
<comment type="subcellular location">
    <subcellularLocation>
        <location evidence="1">Cytoplasm</location>
    </subcellularLocation>
</comment>
<comment type="similarity">
    <text evidence="1">Belongs to the QueA family.</text>
</comment>
<reference key="1">
    <citation type="journal article" date="2006" name="Proc. Natl. Acad. Sci. U.S.A.">
        <title>Molecular genetic anatomy of inter- and intraserotype variation in the human bacterial pathogen group A Streptococcus.</title>
        <authorList>
            <person name="Beres S.B."/>
            <person name="Richter E.W."/>
            <person name="Nagiec M.J."/>
            <person name="Sumby P."/>
            <person name="Porcella S.F."/>
            <person name="DeLeo F.R."/>
            <person name="Musser J.M."/>
        </authorList>
    </citation>
    <scope>NUCLEOTIDE SEQUENCE [LARGE SCALE GENOMIC DNA]</scope>
    <source>
        <strain>MGAS9429</strain>
    </source>
</reference>
<dbReference type="EC" id="2.4.99.17" evidence="1"/>
<dbReference type="EMBL" id="CP000259">
    <property type="protein sequence ID" value="ABF32374.1"/>
    <property type="molecule type" value="Genomic_DNA"/>
</dbReference>
<dbReference type="RefSeq" id="WP_011284937.1">
    <property type="nucleotide sequence ID" value="NC_008021.1"/>
</dbReference>
<dbReference type="SMR" id="Q1JL45"/>
<dbReference type="KEGG" id="spk:MGAS9429_Spy1187"/>
<dbReference type="HOGENOM" id="CLU_039110_1_0_9"/>
<dbReference type="UniPathway" id="UPA00392"/>
<dbReference type="Proteomes" id="UP000002433">
    <property type="component" value="Chromosome"/>
</dbReference>
<dbReference type="GO" id="GO:0005737">
    <property type="term" value="C:cytoplasm"/>
    <property type="evidence" value="ECO:0007669"/>
    <property type="project" value="UniProtKB-SubCell"/>
</dbReference>
<dbReference type="GO" id="GO:0051075">
    <property type="term" value="F:S-adenosylmethionine:tRNA ribosyltransferase-isomerase activity"/>
    <property type="evidence" value="ECO:0007669"/>
    <property type="project" value="UniProtKB-EC"/>
</dbReference>
<dbReference type="GO" id="GO:0008616">
    <property type="term" value="P:queuosine biosynthetic process"/>
    <property type="evidence" value="ECO:0007669"/>
    <property type="project" value="UniProtKB-UniRule"/>
</dbReference>
<dbReference type="GO" id="GO:0002099">
    <property type="term" value="P:tRNA wobble guanine modification"/>
    <property type="evidence" value="ECO:0007669"/>
    <property type="project" value="TreeGrafter"/>
</dbReference>
<dbReference type="FunFam" id="2.40.10.240:FF:000002">
    <property type="entry name" value="S-adenosylmethionine:tRNA ribosyltransferase-isomerase"/>
    <property type="match status" value="1"/>
</dbReference>
<dbReference type="FunFam" id="3.40.1780.10:FF:000001">
    <property type="entry name" value="S-adenosylmethionine:tRNA ribosyltransferase-isomerase"/>
    <property type="match status" value="1"/>
</dbReference>
<dbReference type="Gene3D" id="2.40.10.240">
    <property type="entry name" value="QueA-like"/>
    <property type="match status" value="1"/>
</dbReference>
<dbReference type="Gene3D" id="3.40.1780.10">
    <property type="entry name" value="QueA-like"/>
    <property type="match status" value="1"/>
</dbReference>
<dbReference type="HAMAP" id="MF_00113">
    <property type="entry name" value="QueA"/>
    <property type="match status" value="1"/>
</dbReference>
<dbReference type="InterPro" id="IPR003699">
    <property type="entry name" value="QueA"/>
</dbReference>
<dbReference type="InterPro" id="IPR042118">
    <property type="entry name" value="QueA_dom1"/>
</dbReference>
<dbReference type="InterPro" id="IPR042119">
    <property type="entry name" value="QueA_dom2"/>
</dbReference>
<dbReference type="InterPro" id="IPR036100">
    <property type="entry name" value="QueA_sf"/>
</dbReference>
<dbReference type="NCBIfam" id="NF001140">
    <property type="entry name" value="PRK00147.1"/>
    <property type="match status" value="1"/>
</dbReference>
<dbReference type="NCBIfam" id="TIGR00113">
    <property type="entry name" value="queA"/>
    <property type="match status" value="1"/>
</dbReference>
<dbReference type="PANTHER" id="PTHR30307">
    <property type="entry name" value="S-ADENOSYLMETHIONINE:TRNA RIBOSYLTRANSFERASE-ISOMERASE"/>
    <property type="match status" value="1"/>
</dbReference>
<dbReference type="PANTHER" id="PTHR30307:SF0">
    <property type="entry name" value="S-ADENOSYLMETHIONINE:TRNA RIBOSYLTRANSFERASE-ISOMERASE"/>
    <property type="match status" value="1"/>
</dbReference>
<dbReference type="Pfam" id="PF02547">
    <property type="entry name" value="Queuosine_synth"/>
    <property type="match status" value="1"/>
</dbReference>
<dbReference type="SUPFAM" id="SSF111337">
    <property type="entry name" value="QueA-like"/>
    <property type="match status" value="1"/>
</dbReference>
<organism>
    <name type="scientific">Streptococcus pyogenes serotype M12 (strain MGAS9429)</name>
    <dbReference type="NCBI Taxonomy" id="370551"/>
    <lineage>
        <taxon>Bacteria</taxon>
        <taxon>Bacillati</taxon>
        <taxon>Bacillota</taxon>
        <taxon>Bacilli</taxon>
        <taxon>Lactobacillales</taxon>
        <taxon>Streptococcaceae</taxon>
        <taxon>Streptococcus</taxon>
    </lineage>
</organism>
<sequence>MNTNDFDFELPEELIAQTPLEKRDSSKLLIIDHRQKTMVDSHFDHIIDQLNPGDALVMNNTRVLPARLYGEKPDTHGHVELLLLKNTQGDQWEVLAKPAKRLKVGSQVNFGDGRLKATIIDELEHGGRIVEFSYDGIFLEVLESLGEMPLPPYIHEKLEDAERYQTVYAKENGSAAAPTAGLHFTTDLLKKIEAKGVHLVYLTLHVGLGTFRPVSVDNLDEHDMHSEFYSLSEEAAQTLRDVKQAGGRVVAVGTTSIRTLETIGGKFQGDIQADSGWTNIFIKPGYQFKVVDAFSTNFHLPKSTLVMLVSAFAGRDFVLEAYRHAVDEKYRFFSFGDAMFVN</sequence>